<protein>
    <recommendedName>
        <fullName>Elongation factor Tu, chloroplastic</fullName>
        <shortName>EF-Tu</shortName>
        <ecNumber evidence="2">3.6.5.3</ecNumber>
    </recommendedName>
</protein>
<accession>P50376</accession>
<evidence type="ECO:0000250" key="1"/>
<evidence type="ECO:0000255" key="2">
    <source>
        <dbReference type="HAMAP-Rule" id="MF_00118"/>
    </source>
</evidence>
<evidence type="ECO:0000255" key="3">
    <source>
        <dbReference type="PROSITE-ProRule" id="PRU01059"/>
    </source>
</evidence>
<gene>
    <name type="primary">tufA</name>
</gene>
<reference key="1">
    <citation type="journal article" date="1995" name="Mol. Phylogenet. Evol.">
        <title>Phylogenetic analysis of tufA sequences indicates a cyanobacterial origin of all plastids.</title>
        <authorList>
            <person name="Delwiche C.F."/>
            <person name="Kuhsel M."/>
            <person name="Palmer J.D."/>
        </authorList>
    </citation>
    <scope>NUCLEOTIDE SEQUENCE [GENOMIC DNA]</scope>
</reference>
<sequence>KNMITGAAQMDGAILVVSAADGPMPQTREHILLSKQVGVPHIVVFLNKEDQVDDLELVELVELEVRELLSNYDFPGDDIPILTGSALQALDAINNEPTLKKGDNKWVDKIYSLMESVDSYIPTPIRDVDKPFLMAIEDVFSITGRGTVATGKIDRGIVKVGETVDLVGLGDTKSTTVTGVEMFQKTLDEGVAGDNVGILLRGLQKGDIERGMVLSKPGTITPHNTFESELYILTK</sequence>
<comment type="function">
    <text evidence="2">GTP hydrolase that promotes the GTP-dependent binding of aminoacyl-tRNA to the A-site of ribosomes during protein biosynthesis.</text>
</comment>
<comment type="catalytic activity">
    <reaction evidence="2">
        <text>GTP + H2O = GDP + phosphate + H(+)</text>
        <dbReference type="Rhea" id="RHEA:19669"/>
        <dbReference type="ChEBI" id="CHEBI:15377"/>
        <dbReference type="ChEBI" id="CHEBI:15378"/>
        <dbReference type="ChEBI" id="CHEBI:37565"/>
        <dbReference type="ChEBI" id="CHEBI:43474"/>
        <dbReference type="ChEBI" id="CHEBI:58189"/>
        <dbReference type="EC" id="3.6.5.3"/>
    </reaction>
    <physiologicalReaction direction="left-to-right" evidence="2">
        <dbReference type="Rhea" id="RHEA:19670"/>
    </physiologicalReaction>
</comment>
<comment type="subcellular location">
    <subcellularLocation>
        <location>Plastid</location>
        <location>Chloroplast</location>
    </subcellularLocation>
</comment>
<comment type="similarity">
    <text evidence="3">Belongs to the TRAFAC class translation factor GTPase superfamily. Classic translation factor GTPase family. EF-Tu/EF-1A subfamily.</text>
</comment>
<dbReference type="EC" id="3.6.5.3" evidence="2"/>
<dbReference type="EMBL" id="U09429">
    <property type="protein sequence ID" value="AAA87686.1"/>
    <property type="molecule type" value="Genomic_DNA"/>
</dbReference>
<dbReference type="SMR" id="P50376"/>
<dbReference type="GO" id="GO:0009507">
    <property type="term" value="C:chloroplast"/>
    <property type="evidence" value="ECO:0007669"/>
    <property type="project" value="UniProtKB-SubCell"/>
</dbReference>
<dbReference type="GO" id="GO:0005829">
    <property type="term" value="C:cytosol"/>
    <property type="evidence" value="ECO:0007669"/>
    <property type="project" value="TreeGrafter"/>
</dbReference>
<dbReference type="GO" id="GO:0005525">
    <property type="term" value="F:GTP binding"/>
    <property type="evidence" value="ECO:0007669"/>
    <property type="project" value="UniProtKB-KW"/>
</dbReference>
<dbReference type="GO" id="GO:0003924">
    <property type="term" value="F:GTPase activity"/>
    <property type="evidence" value="ECO:0007669"/>
    <property type="project" value="InterPro"/>
</dbReference>
<dbReference type="GO" id="GO:0003746">
    <property type="term" value="F:translation elongation factor activity"/>
    <property type="evidence" value="ECO:0007669"/>
    <property type="project" value="UniProtKB-KW"/>
</dbReference>
<dbReference type="CDD" id="cd03697">
    <property type="entry name" value="EFTU_II"/>
    <property type="match status" value="1"/>
</dbReference>
<dbReference type="FunFam" id="2.40.30.10:FF:000001">
    <property type="entry name" value="Elongation factor Tu"/>
    <property type="match status" value="1"/>
</dbReference>
<dbReference type="Gene3D" id="3.40.50.300">
    <property type="entry name" value="P-loop containing nucleotide triphosphate hydrolases"/>
    <property type="match status" value="1"/>
</dbReference>
<dbReference type="Gene3D" id="2.40.30.10">
    <property type="entry name" value="Translation factors"/>
    <property type="match status" value="1"/>
</dbReference>
<dbReference type="InterPro" id="IPR050055">
    <property type="entry name" value="EF-Tu_GTPase"/>
</dbReference>
<dbReference type="InterPro" id="IPR004161">
    <property type="entry name" value="EFTu-like_2"/>
</dbReference>
<dbReference type="InterPro" id="IPR033720">
    <property type="entry name" value="EFTU_2"/>
</dbReference>
<dbReference type="InterPro" id="IPR027417">
    <property type="entry name" value="P-loop_NTPase"/>
</dbReference>
<dbReference type="InterPro" id="IPR000795">
    <property type="entry name" value="T_Tr_GTP-bd_dom"/>
</dbReference>
<dbReference type="InterPro" id="IPR009000">
    <property type="entry name" value="Transl_B-barrel_sf"/>
</dbReference>
<dbReference type="PANTHER" id="PTHR43721:SF22">
    <property type="entry name" value="ELONGATION FACTOR TU, MITOCHONDRIAL"/>
    <property type="match status" value="1"/>
</dbReference>
<dbReference type="PANTHER" id="PTHR43721">
    <property type="entry name" value="ELONGATION FACTOR TU-RELATED"/>
    <property type="match status" value="1"/>
</dbReference>
<dbReference type="Pfam" id="PF00009">
    <property type="entry name" value="GTP_EFTU"/>
    <property type="match status" value="1"/>
</dbReference>
<dbReference type="Pfam" id="PF03144">
    <property type="entry name" value="GTP_EFTU_D2"/>
    <property type="match status" value="1"/>
</dbReference>
<dbReference type="PRINTS" id="PR00315">
    <property type="entry name" value="ELONGATNFCT"/>
</dbReference>
<dbReference type="SUPFAM" id="SSF52540">
    <property type="entry name" value="P-loop containing nucleoside triphosphate hydrolases"/>
    <property type="match status" value="1"/>
</dbReference>
<dbReference type="SUPFAM" id="SSF50447">
    <property type="entry name" value="Translation proteins"/>
    <property type="match status" value="1"/>
</dbReference>
<dbReference type="PROSITE" id="PS51722">
    <property type="entry name" value="G_TR_2"/>
    <property type="match status" value="1"/>
</dbReference>
<organism>
    <name type="scientific">Costaria costata</name>
    <name type="common">Five-ribbed kelp</name>
    <name type="synonym">Laminaria costata</name>
    <dbReference type="NCBI Taxonomy" id="2872"/>
    <lineage>
        <taxon>Eukaryota</taxon>
        <taxon>Sar</taxon>
        <taxon>Stramenopiles</taxon>
        <taxon>Ochrophyta</taxon>
        <taxon>PX clade</taxon>
        <taxon>Phaeophyceae</taxon>
        <taxon>Laminariales</taxon>
        <taxon>Costaria</taxon>
    </lineage>
</organism>
<name>EFTU_COSCS</name>
<keyword id="KW-0150">Chloroplast</keyword>
<keyword id="KW-0251">Elongation factor</keyword>
<keyword id="KW-0342">GTP-binding</keyword>
<keyword id="KW-0378">Hydrolase</keyword>
<keyword id="KW-0547">Nucleotide-binding</keyword>
<keyword id="KW-0934">Plastid</keyword>
<keyword id="KW-0648">Protein biosynthesis</keyword>
<feature type="chain" id="PRO_0000091452" description="Elongation factor Tu, chloroplastic">
    <location>
        <begin position="1" status="less than"/>
        <end position="235" status="greater than"/>
    </location>
</feature>
<feature type="domain" description="tr-type G" evidence="3">
    <location>
        <begin position="1" status="less than"/>
        <end position="125"/>
    </location>
</feature>
<feature type="binding site" evidence="1">
    <location>
        <begin position="47"/>
        <end position="50"/>
    </location>
    <ligand>
        <name>GTP</name>
        <dbReference type="ChEBI" id="CHEBI:37565"/>
    </ligand>
</feature>
<feature type="non-terminal residue">
    <location>
        <position position="1"/>
    </location>
</feature>
<feature type="non-terminal residue">
    <location>
        <position position="235"/>
    </location>
</feature>
<geneLocation type="chloroplast"/>
<proteinExistence type="inferred from homology"/>